<comment type="function">
    <text evidence="1">Involved in the efflux of sugars. The physiological role may be the reduction of the intracellular concentration of toxic sugars or sugar metabolites.</text>
</comment>
<comment type="subcellular location">
    <subcellularLocation>
        <location evidence="1">Cell inner membrane</location>
        <topology evidence="1">Multi-pass membrane protein</topology>
    </subcellularLocation>
</comment>
<comment type="similarity">
    <text evidence="1">Belongs to the major facilitator superfamily. SotB (TC 2.A.1.2) family.</text>
</comment>
<protein>
    <recommendedName>
        <fullName evidence="1">Probable sugar efflux transporter</fullName>
    </recommendedName>
</protein>
<dbReference type="EMBL" id="CP000647">
    <property type="protein sequence ID" value="ABR77059.1"/>
    <property type="molecule type" value="Genomic_DNA"/>
</dbReference>
<dbReference type="RefSeq" id="WP_002904407.1">
    <property type="nucleotide sequence ID" value="NC_009648.1"/>
</dbReference>
<dbReference type="SMR" id="A6T8Y8"/>
<dbReference type="STRING" id="272620.KPN_01628"/>
<dbReference type="PaxDb" id="272620-KPN_01628"/>
<dbReference type="EnsemblBacteria" id="ABR77059">
    <property type="protein sequence ID" value="ABR77059"/>
    <property type="gene ID" value="KPN_01628"/>
</dbReference>
<dbReference type="KEGG" id="kpn:KPN_01628"/>
<dbReference type="HOGENOM" id="CLU_001265_61_1_6"/>
<dbReference type="Proteomes" id="UP000000265">
    <property type="component" value="Chromosome"/>
</dbReference>
<dbReference type="GO" id="GO:0005886">
    <property type="term" value="C:plasma membrane"/>
    <property type="evidence" value="ECO:0007669"/>
    <property type="project" value="UniProtKB-SubCell"/>
</dbReference>
<dbReference type="GO" id="GO:0015144">
    <property type="term" value="F:carbohydrate transmembrane transporter activity"/>
    <property type="evidence" value="ECO:0007669"/>
    <property type="project" value="UniProtKB-UniRule"/>
</dbReference>
<dbReference type="CDD" id="cd17324">
    <property type="entry name" value="MFS_NepI_like"/>
    <property type="match status" value="1"/>
</dbReference>
<dbReference type="Gene3D" id="1.20.1250.20">
    <property type="entry name" value="MFS general substrate transporter like domains"/>
    <property type="match status" value="1"/>
</dbReference>
<dbReference type="HAMAP" id="MF_00517">
    <property type="entry name" value="MFS_SotB"/>
    <property type="match status" value="1"/>
</dbReference>
<dbReference type="InterPro" id="IPR011701">
    <property type="entry name" value="MFS"/>
</dbReference>
<dbReference type="InterPro" id="IPR020846">
    <property type="entry name" value="MFS_dom"/>
</dbReference>
<dbReference type="InterPro" id="IPR050189">
    <property type="entry name" value="MFS_Efflux_Transporters"/>
</dbReference>
<dbReference type="InterPro" id="IPR036259">
    <property type="entry name" value="MFS_trans_sf"/>
</dbReference>
<dbReference type="InterPro" id="IPR023495">
    <property type="entry name" value="Sugar_effux_transptr_put"/>
</dbReference>
<dbReference type="NCBIfam" id="NF002921">
    <property type="entry name" value="PRK03545.1"/>
    <property type="match status" value="1"/>
</dbReference>
<dbReference type="PANTHER" id="PTHR43124">
    <property type="entry name" value="PURINE EFFLUX PUMP PBUE"/>
    <property type="match status" value="1"/>
</dbReference>
<dbReference type="PANTHER" id="PTHR43124:SF4">
    <property type="entry name" value="SUGAR EFFLUX TRANSPORTER"/>
    <property type="match status" value="1"/>
</dbReference>
<dbReference type="Pfam" id="PF07690">
    <property type="entry name" value="MFS_1"/>
    <property type="match status" value="1"/>
</dbReference>
<dbReference type="SUPFAM" id="SSF103473">
    <property type="entry name" value="MFS general substrate transporter"/>
    <property type="match status" value="1"/>
</dbReference>
<dbReference type="PROSITE" id="PS50850">
    <property type="entry name" value="MFS"/>
    <property type="match status" value="1"/>
</dbReference>
<proteinExistence type="inferred from homology"/>
<name>SOTB_KLEP7</name>
<feature type="chain" id="PRO_1000050800" description="Probable sugar efflux transporter">
    <location>
        <begin position="1"/>
        <end position="399"/>
    </location>
</feature>
<feature type="transmembrane region" description="Helical" evidence="1">
    <location>
        <begin position="15"/>
        <end position="35"/>
    </location>
</feature>
<feature type="transmembrane region" description="Helical" evidence="1">
    <location>
        <begin position="50"/>
        <end position="70"/>
    </location>
</feature>
<feature type="transmembrane region" description="Helical" evidence="1">
    <location>
        <begin position="81"/>
        <end position="101"/>
    </location>
</feature>
<feature type="transmembrane region" description="Helical" evidence="1">
    <location>
        <begin position="103"/>
        <end position="123"/>
    </location>
</feature>
<feature type="transmembrane region" description="Helical" evidence="1">
    <location>
        <begin position="136"/>
        <end position="156"/>
    </location>
</feature>
<feature type="transmembrane region" description="Helical" evidence="1">
    <location>
        <begin position="168"/>
        <end position="188"/>
    </location>
</feature>
<feature type="transmembrane region" description="Helical" evidence="1">
    <location>
        <begin position="209"/>
        <end position="229"/>
    </location>
</feature>
<feature type="transmembrane region" description="Helical" evidence="1">
    <location>
        <begin position="246"/>
        <end position="266"/>
    </location>
</feature>
<feature type="transmembrane region" description="Helical" evidence="1">
    <location>
        <begin position="273"/>
        <end position="293"/>
    </location>
</feature>
<feature type="transmembrane region" description="Helical" evidence="1">
    <location>
        <begin position="301"/>
        <end position="321"/>
    </location>
</feature>
<feature type="transmembrane region" description="Helical" evidence="1">
    <location>
        <begin position="333"/>
        <end position="353"/>
    </location>
</feature>
<feature type="transmembrane region" description="Helical" evidence="1">
    <location>
        <begin position="364"/>
        <end position="384"/>
    </location>
</feature>
<evidence type="ECO:0000255" key="1">
    <source>
        <dbReference type="HAMAP-Rule" id="MF_00517"/>
    </source>
</evidence>
<organism>
    <name type="scientific">Klebsiella pneumoniae subsp. pneumoniae (strain ATCC 700721 / MGH 78578)</name>
    <dbReference type="NCBI Taxonomy" id="272620"/>
    <lineage>
        <taxon>Bacteria</taxon>
        <taxon>Pseudomonadati</taxon>
        <taxon>Pseudomonadota</taxon>
        <taxon>Gammaproteobacteria</taxon>
        <taxon>Enterobacterales</taxon>
        <taxon>Enterobacteriaceae</taxon>
        <taxon>Klebsiella/Raoultella group</taxon>
        <taxon>Klebsiella</taxon>
        <taxon>Klebsiella pneumoniae complex</taxon>
    </lineage>
</organism>
<keyword id="KW-0997">Cell inner membrane</keyword>
<keyword id="KW-1003">Cell membrane</keyword>
<keyword id="KW-0472">Membrane</keyword>
<keyword id="KW-0762">Sugar transport</keyword>
<keyword id="KW-0812">Transmembrane</keyword>
<keyword id="KW-1133">Transmembrane helix</keyword>
<keyword id="KW-0813">Transport</keyword>
<sequence length="399" mass="42609">MTTNTVSRKVAWLRVVTLAIAAFIFNTTEFAPVGLLSDIADSFGMETAQVGMMLTIYAWVVALMSLPFMLLTSKVERRRLLIGLFILFIASHVLSFFAWNFDVLVISRIGIAFAHAVFWSITSALAIRMAPPGKRAQALSLIATGTALAMVFGIPIGRIIGQYFGWRMTFLAIGLGALATLACLVKLLPTLPSEHSGSLKSLPVLFRRPALVSVYILTVVVVTAHYTAYSYIEPFVQTVAGLSGNFATVLLLILGGAGIIGSILFGKLGNQHASGLISLAIALLLACLLLLLPASHNPQHLMLLSIFWGVAIMIIGLGMQVKVLASAPDATDVAMSLFSGIFNIGIGAGALVGSQVSLHLSMASVGYVGAIPALVALVWSLMIFRRWPVSLEDHQPHHS</sequence>
<reference key="1">
    <citation type="submission" date="2006-09" db="EMBL/GenBank/DDBJ databases">
        <authorList>
            <consortium name="The Klebsiella pneumonia Genome Sequencing Project"/>
            <person name="McClelland M."/>
            <person name="Sanderson E.K."/>
            <person name="Spieth J."/>
            <person name="Clifton W.S."/>
            <person name="Latreille P."/>
            <person name="Sabo A."/>
            <person name="Pepin K."/>
            <person name="Bhonagiri V."/>
            <person name="Porwollik S."/>
            <person name="Ali J."/>
            <person name="Wilson R.K."/>
        </authorList>
    </citation>
    <scope>NUCLEOTIDE SEQUENCE [LARGE SCALE GENOMIC DNA]</scope>
    <source>
        <strain>ATCC 700721 / MGH 78578</strain>
    </source>
</reference>
<gene>
    <name evidence="1" type="primary">sotB</name>
    <name type="ordered locus">KPN78578_15980</name>
    <name type="ORF">KPN_01628</name>
</gene>
<accession>A6T8Y8</accession>